<sequence>ATVPLTMDGLDLQKVAGTWHSMAMAASDISLLDSEYAPLRVYVQELRPTPRDNLEIILRKWEQKRCVQKKILAQKTELPAEFKISYLDENELIVLDTDYENYLFFCLENADAPGQNLVCQCLTRTLKADNEVMEKFDRALQTLPVDVRLFFDPTQVAEQCRI</sequence>
<accession>P33688</accession>
<evidence type="ECO:0000250" key="1"/>
<evidence type="ECO:0000305" key="2"/>
<protein>
    <recommendedName>
        <fullName>Beta-lactoglobulin-3</fullName>
        <shortName>Beta-LG-3</shortName>
    </recommendedName>
    <alternativeName>
        <fullName>Beta-lactoglobulin III</fullName>
    </alternativeName>
</protein>
<reference key="1">
    <citation type="journal article" date="1993" name="Protein Seq. Data Anal.">
        <title>Feline beta-lactoglobulins I, II and III, and canine beta-lactoglobulins I and II: amino acid sequences provide evidence for the existence of more than one gene for beta-lactoglobulin in the cat and dog.</title>
        <authorList>
            <person name="Halliday J.A."/>
            <person name="Bell K."/>
            <person name="McAndrew K."/>
            <person name="Shaw D.C."/>
        </authorList>
    </citation>
    <scope>PROTEIN SEQUENCE</scope>
</reference>
<reference key="2">
    <citation type="journal article" date="1990" name="Comp. Biochem. Physiol.">
        <title>Feline whey proteins: identification, isolation and initial characterization of alpha-lactalbumin, beta-lactoglobulin and lysozyme.</title>
        <authorList>
            <person name="Halliday J.A."/>
            <person name="Bell K."/>
            <person name="McKenzie H.A."/>
            <person name="Shaw D.C."/>
        </authorList>
    </citation>
    <scope>PROTEIN SEQUENCE OF 1-24</scope>
    <source>
        <tissue>Milk</tissue>
    </source>
</reference>
<proteinExistence type="evidence at protein level"/>
<comment type="function">
    <text>Lactoglobulin is the primary component of whey, it binds retinol and is probably involved in the transport of that molecule.</text>
</comment>
<comment type="subunit">
    <text>Monomer.</text>
</comment>
<comment type="subcellular location">
    <subcellularLocation>
        <location>Secreted</location>
    </subcellularLocation>
</comment>
<comment type="similarity">
    <text evidence="2">Belongs to the calycin superfamily. Lipocalin family.</text>
</comment>
<organism>
    <name type="scientific">Felis catus</name>
    <name type="common">Cat</name>
    <name type="synonym">Felis silvestris catus</name>
    <dbReference type="NCBI Taxonomy" id="9685"/>
    <lineage>
        <taxon>Eukaryota</taxon>
        <taxon>Metazoa</taxon>
        <taxon>Chordata</taxon>
        <taxon>Craniata</taxon>
        <taxon>Vertebrata</taxon>
        <taxon>Euteleostomi</taxon>
        <taxon>Mammalia</taxon>
        <taxon>Eutheria</taxon>
        <taxon>Laurasiatheria</taxon>
        <taxon>Carnivora</taxon>
        <taxon>Feliformia</taxon>
        <taxon>Felidae</taxon>
        <taxon>Felinae</taxon>
        <taxon>Felis</taxon>
    </lineage>
</organism>
<keyword id="KW-0903">Direct protein sequencing</keyword>
<keyword id="KW-1015">Disulfide bond</keyword>
<keyword id="KW-0494">Milk protein</keyword>
<keyword id="KW-1185">Reference proteome</keyword>
<keyword id="KW-0683">Retinol-binding</keyword>
<keyword id="KW-0964">Secreted</keyword>
<keyword id="KW-0813">Transport</keyword>
<name>LACB3_FELCA</name>
<dbReference type="PIR" id="S33876">
    <property type="entry name" value="S33876"/>
</dbReference>
<dbReference type="SMR" id="P33688"/>
<dbReference type="FunCoup" id="P33688">
    <property type="interactions" value="2"/>
</dbReference>
<dbReference type="InParanoid" id="P33688"/>
<dbReference type="Proteomes" id="UP000011712">
    <property type="component" value="Unplaced"/>
</dbReference>
<dbReference type="GO" id="GO:0005576">
    <property type="term" value="C:extracellular region"/>
    <property type="evidence" value="ECO:0007669"/>
    <property type="project" value="UniProtKB-SubCell"/>
</dbReference>
<dbReference type="GO" id="GO:0019841">
    <property type="term" value="F:retinol binding"/>
    <property type="evidence" value="ECO:0007669"/>
    <property type="project" value="UniProtKB-KW"/>
</dbReference>
<dbReference type="CDD" id="cd19416">
    <property type="entry name" value="lipocalin_beta-LG-like"/>
    <property type="match status" value="1"/>
</dbReference>
<dbReference type="Gene3D" id="2.40.128.20">
    <property type="match status" value="1"/>
</dbReference>
<dbReference type="InterPro" id="IPR002447">
    <property type="entry name" value="Blactoglobulin"/>
</dbReference>
<dbReference type="InterPro" id="IPR012674">
    <property type="entry name" value="Calycin"/>
</dbReference>
<dbReference type="InterPro" id="IPR002345">
    <property type="entry name" value="Lipocalin"/>
</dbReference>
<dbReference type="InterPro" id="IPR022272">
    <property type="entry name" value="Lipocalin_CS"/>
</dbReference>
<dbReference type="InterPro" id="IPR000566">
    <property type="entry name" value="Lipocln_cytosolic_FA-bd_dom"/>
</dbReference>
<dbReference type="PANTHER" id="PTHR11430:SF117">
    <property type="entry name" value="GLYCODELIN"/>
    <property type="match status" value="1"/>
</dbReference>
<dbReference type="PANTHER" id="PTHR11430">
    <property type="entry name" value="LIPOCALIN"/>
    <property type="match status" value="1"/>
</dbReference>
<dbReference type="Pfam" id="PF00061">
    <property type="entry name" value="Lipocalin"/>
    <property type="match status" value="1"/>
</dbReference>
<dbReference type="PRINTS" id="PR01172">
    <property type="entry name" value="BLCTOGLOBULN"/>
</dbReference>
<dbReference type="PRINTS" id="PR00179">
    <property type="entry name" value="LIPOCALIN"/>
</dbReference>
<dbReference type="SUPFAM" id="SSF50814">
    <property type="entry name" value="Lipocalins"/>
    <property type="match status" value="1"/>
</dbReference>
<dbReference type="PROSITE" id="PS00213">
    <property type="entry name" value="LIPOCALIN"/>
    <property type="match status" value="1"/>
</dbReference>
<gene>
    <name type="primary">LGB3</name>
</gene>
<feature type="chain" id="PRO_0000201019" description="Beta-lactoglobulin-3">
    <location>
        <begin position="1"/>
        <end position="162"/>
    </location>
</feature>
<feature type="disulfide bond" evidence="1">
    <location>
        <begin position="66"/>
        <end position="160"/>
    </location>
</feature>
<feature type="disulfide bond" evidence="1">
    <location>
        <begin position="106"/>
        <end position="119"/>
    </location>
</feature>